<name>FTSH3_SYNY3</name>
<reference key="1">
    <citation type="journal article" date="1996" name="DNA Res.">
        <title>Sequence analysis of the genome of the unicellular cyanobacterium Synechocystis sp. strain PCC6803. II. Sequence determination of the entire genome and assignment of potential protein-coding regions.</title>
        <authorList>
            <person name="Kaneko T."/>
            <person name="Sato S."/>
            <person name="Kotani H."/>
            <person name="Tanaka A."/>
            <person name="Asamizu E."/>
            <person name="Nakamura Y."/>
            <person name="Miyajima N."/>
            <person name="Hirosawa M."/>
            <person name="Sugiura M."/>
            <person name="Sasamoto S."/>
            <person name="Kimura T."/>
            <person name="Hosouchi T."/>
            <person name="Matsuno A."/>
            <person name="Muraki A."/>
            <person name="Nakazaki N."/>
            <person name="Naruo K."/>
            <person name="Okumura S."/>
            <person name="Shimpo S."/>
            <person name="Takeuchi C."/>
            <person name="Wada T."/>
            <person name="Watanabe A."/>
            <person name="Yamada M."/>
            <person name="Yasuda M."/>
            <person name="Tabata S."/>
        </authorList>
    </citation>
    <scope>NUCLEOTIDE SEQUENCE [LARGE SCALE GENOMIC DNA]</scope>
    <source>
        <strain>ATCC 27184 / PCC 6803 / Kazusa</strain>
    </source>
</reference>
<reference key="2">
    <citation type="journal article" date="2000" name="FEBS Lett.">
        <title>Involvement of an FtsH homologue in the assembly of functional photosystem I in the cyanobacterium Synechocystis sp. PCC 6803.</title>
        <authorList>
            <person name="Mann N.H."/>
            <person name="Novac N."/>
            <person name="Mullineaux C.W."/>
            <person name="Newman J."/>
            <person name="Bailey S."/>
            <person name="Robinson C."/>
        </authorList>
    </citation>
    <scope>DISRUPTION PHENOTYPE</scope>
</reference>
<reference key="3">
    <citation type="journal article" date="2002" name="Biochemistry">
        <title>Proteomic analysis of a highly active photosystem II preparation from the cyanobacterium Synechocystis sp. PCC 6803 reveals the presence of novel polypeptides.</title>
        <authorList>
            <person name="Kashino Y."/>
            <person name="Lauber W.M."/>
            <person name="Carroll J.A."/>
            <person name="Wang Q."/>
            <person name="Whitmarsh J."/>
            <person name="Satoh K."/>
            <person name="Pakrasi H.B."/>
        </authorList>
    </citation>
    <scope>SUBCELLULAR LOCATION</scope>
    <scope>IDENTIFICATION BY MASS SPECTROMETRY</scope>
</reference>
<reference key="4">
    <citation type="journal article" date="2007" name="Biochim. Biophys. Acta">
        <title>The role of the FtsH and Deg proteases in the repair of UV-B radiation-damaged Photosystem II in the cyanobacterium Synechocystis PCC 6803.</title>
        <authorList>
            <person name="Cheregi O."/>
            <person name="Sicora C."/>
            <person name="Kos P.B."/>
            <person name="Barker M."/>
            <person name="Nixon P.J."/>
            <person name="Vass I."/>
        </authorList>
    </citation>
    <scope>INDUCTION</scope>
</reference>
<reference key="5">
    <citation type="journal article" date="2007" name="Mol. Microbiol.">
        <title>FtsH protease is required for induction of inorganic carbon acquisition complexes in Synechocystis sp. PCC 6803.</title>
        <authorList>
            <person name="Zhang P."/>
            <person name="Sicora C.I."/>
            <person name="Vorontsova N."/>
            <person name="Allahverdiyeva Y."/>
            <person name="Battchikova N."/>
            <person name="Nixon P.J."/>
            <person name="Aro E.M."/>
        </authorList>
    </citation>
    <scope>INTERACTION WITH FTSH2 AND PSII</scope>
    <scope>INDUCTION BY OXIDATIVE STRESS</scope>
</reference>
<reference key="6">
    <citation type="journal article" date="2018" name="Proc. Natl. Acad. Sci. U.S.A.">
        <title>Ycf48 involved in the biogenesis of the oxygen-evolving photosystem II complex is a seven-bladed beta-propeller protein.</title>
        <authorList>
            <person name="Yu J."/>
            <person name="Knoppova J."/>
            <person name="Michoux F."/>
            <person name="Bialek W."/>
            <person name="Cota E."/>
            <person name="Shukla M.K."/>
            <person name="Straskova A."/>
            <person name="Pascual Aznar G."/>
            <person name="Sobotka R."/>
            <person name="Komenda J."/>
            <person name="Murray J.W."/>
            <person name="Nixon P.J."/>
        </authorList>
    </citation>
    <scope>INTERACTION WITH YIDC</scope>
    <scope>SUBUNIT</scope>
    <source>
        <strain>ATCC 27184 / PCC 6803 / Kazusa</strain>
    </source>
</reference>
<organism>
    <name type="scientific">Synechocystis sp. (strain ATCC 27184 / PCC 6803 / Kazusa)</name>
    <dbReference type="NCBI Taxonomy" id="1111708"/>
    <lineage>
        <taxon>Bacteria</taxon>
        <taxon>Bacillati</taxon>
        <taxon>Cyanobacteriota</taxon>
        <taxon>Cyanophyceae</taxon>
        <taxon>Synechococcales</taxon>
        <taxon>Merismopediaceae</taxon>
        <taxon>Synechocystis</taxon>
    </lineage>
</organism>
<comment type="function">
    <text evidence="1">Acts as a processive, ATP-dependent zinc metallopeptidase for both cytoplasmic and membrane proteins. Plays a role in the quality control of integral membrane proteins.</text>
</comment>
<comment type="cofactor">
    <cofactor evidence="1">
        <name>Zn(2+)</name>
        <dbReference type="ChEBI" id="CHEBI:29105"/>
    </cofactor>
    <text evidence="1">Binds 1 zinc ion per subunit.</text>
</comment>
<comment type="subunit">
    <text evidence="1 6">Homohexamer (Potential). Part of a large complex that includes FtsH2 and PSII. Coimmunoprecipitates with YidC (PubMed:30061392).</text>
</comment>
<comment type="subcellular location">
    <subcellularLocation>
        <location evidence="1 3">Cellular thylakoid membrane</location>
        <topology evidence="1 3">Multi-pass membrane protein</topology>
        <orientation evidence="1 3">Stromal side</orientation>
    </subcellularLocation>
    <text>Some is found associated with photosystem II.</text>
</comment>
<comment type="induction">
    <text evidence="4 5">By UV-B light and oxidative stress provided by methyl viologen.</text>
</comment>
<comment type="disruption phenotype">
    <text evidence="2">A homozygous disruption strain was not identified, suggesting this gene may be essential.</text>
</comment>
<comment type="similarity">
    <text evidence="1">In the central section; belongs to the AAA ATPase family.</text>
</comment>
<comment type="similarity">
    <text evidence="1">In the C-terminal section; belongs to the peptidase M41 family.</text>
</comment>
<protein>
    <recommendedName>
        <fullName evidence="1">ATP-dependent zinc metalloprotease FtsH 3</fullName>
        <ecNumber evidence="1">3.4.24.-</ecNumber>
    </recommendedName>
</protein>
<evidence type="ECO:0000255" key="1">
    <source>
        <dbReference type="HAMAP-Rule" id="MF_01458"/>
    </source>
</evidence>
<evidence type="ECO:0000269" key="2">
    <source>
    </source>
</evidence>
<evidence type="ECO:0000269" key="3">
    <source>
    </source>
</evidence>
<evidence type="ECO:0000269" key="4">
    <source>
    </source>
</evidence>
<evidence type="ECO:0000269" key="5">
    <source>
    </source>
</evidence>
<evidence type="ECO:0000269" key="6">
    <source>
    </source>
</evidence>
<feature type="chain" id="PRO_0000084655" description="ATP-dependent zinc metalloprotease FtsH 3">
    <location>
        <begin position="1"/>
        <end position="616"/>
    </location>
</feature>
<feature type="topological domain" description="Cytoplasmic" evidence="1">
    <location>
        <begin position="1"/>
        <end position="9"/>
    </location>
</feature>
<feature type="transmembrane region" description="Helical" evidence="1">
    <location>
        <begin position="10"/>
        <end position="30"/>
    </location>
</feature>
<feature type="topological domain" description="Lumenal" evidence="1">
    <location>
        <begin position="31"/>
        <end position="108"/>
    </location>
</feature>
<feature type="transmembrane region" description="Helical" evidence="1">
    <location>
        <begin position="109"/>
        <end position="129"/>
    </location>
</feature>
<feature type="topological domain" description="Cytoplasmic" evidence="1">
    <location>
        <begin position="130"/>
        <end position="616"/>
    </location>
</feature>
<feature type="active site" evidence="1">
    <location>
        <position position="424"/>
    </location>
</feature>
<feature type="binding site" evidence="1">
    <location>
        <begin position="201"/>
        <end position="208"/>
    </location>
    <ligand>
        <name>ATP</name>
        <dbReference type="ChEBI" id="CHEBI:30616"/>
    </ligand>
</feature>
<feature type="binding site" evidence="1">
    <location>
        <position position="423"/>
    </location>
    <ligand>
        <name>Zn(2+)</name>
        <dbReference type="ChEBI" id="CHEBI:29105"/>
        <note>catalytic</note>
    </ligand>
</feature>
<feature type="binding site" evidence="1">
    <location>
        <position position="427"/>
    </location>
    <ligand>
        <name>Zn(2+)</name>
        <dbReference type="ChEBI" id="CHEBI:29105"/>
        <note>catalytic</note>
    </ligand>
</feature>
<feature type="binding site" evidence="1">
    <location>
        <position position="504"/>
    </location>
    <ligand>
        <name>Zn(2+)</name>
        <dbReference type="ChEBI" id="CHEBI:29105"/>
        <note>catalytic</note>
    </ligand>
</feature>
<gene>
    <name evidence="1" type="primary">ftsH3</name>
    <name type="ordered locus">slr1604</name>
</gene>
<sequence length="616" mass="67250">MSKNNKKWRNAGLYALLLIVVLALASAFFDRPTQTRETLSYSDFVNRVEANQIERVNLSADRTQAQVPNPSGGPPYLVNLPNDPDLINILTQHNVDIAVQPQSDEGFWFRIASTLFLPILLLVGIFFLFRRAQSGPGSQAMNFGKSKARVQMEPQTQVTFGDVAGIEQAKLELTEVVDFLKNADRFTELGAKIPKGVLLVGPPGTGKTLLAKAVAGEAGVPFFSISGSEFVEMFVGVGASRVRDLFEQAKANAPCIVFIDEIDAVGRQRGAGLGGGNDEREQTLNQLLTEMDGFEGNTGIIIVAATNRPDVLDSALMRPGRFDRQVVVDRPDYAGRREILNVHARGKTLSQDVDLDKIARRTPGFTGADLSNLLNEAAILAARRNLTEISMDEVNDAIDRVLAGPEKKNRVMSEKRKTLVAYHEAGHALVGALMPDYDPVQKISIIPRGRAGGLTWFTPSEDRMESGLYSRSYLQNQMAVALGGRIAEEIIFGEEEVTTGASNDLQQVARVARQMVTRFGMSDRLGPVALGRQGGGVFLGRDIASDRDFSDETAAAIDEEVSQLVDQAYQRAKQVLVENRGILDQLAEILVEKETVDSEELQTLLANNNAKLALLV</sequence>
<accession>P72991</accession>
<keyword id="KW-0067">ATP-binding</keyword>
<keyword id="KW-0378">Hydrolase</keyword>
<keyword id="KW-0472">Membrane</keyword>
<keyword id="KW-0479">Metal-binding</keyword>
<keyword id="KW-0482">Metalloprotease</keyword>
<keyword id="KW-0547">Nucleotide-binding</keyword>
<keyword id="KW-0645">Protease</keyword>
<keyword id="KW-1185">Reference proteome</keyword>
<keyword id="KW-0793">Thylakoid</keyword>
<keyword id="KW-0812">Transmembrane</keyword>
<keyword id="KW-1133">Transmembrane helix</keyword>
<keyword id="KW-0862">Zinc</keyword>
<dbReference type="EC" id="3.4.24.-" evidence="1"/>
<dbReference type="EMBL" id="BA000022">
    <property type="protein sequence ID" value="BAA17010.1"/>
    <property type="molecule type" value="Genomic_DNA"/>
</dbReference>
<dbReference type="PIR" id="S74970">
    <property type="entry name" value="S74970"/>
</dbReference>
<dbReference type="SMR" id="P72991"/>
<dbReference type="FunCoup" id="P72991">
    <property type="interactions" value="484"/>
</dbReference>
<dbReference type="IntAct" id="P72991">
    <property type="interactions" value="8"/>
</dbReference>
<dbReference type="STRING" id="1148.gene:10497871"/>
<dbReference type="MEROPS" id="M41.024"/>
<dbReference type="PaxDb" id="1148-1652085"/>
<dbReference type="EnsemblBacteria" id="BAA17010">
    <property type="protein sequence ID" value="BAA17010"/>
    <property type="gene ID" value="BAA17010"/>
</dbReference>
<dbReference type="KEGG" id="syn:slr1604"/>
<dbReference type="eggNOG" id="COG0465">
    <property type="taxonomic scope" value="Bacteria"/>
</dbReference>
<dbReference type="InParanoid" id="P72991"/>
<dbReference type="PhylomeDB" id="P72991"/>
<dbReference type="BRENDA" id="3.4.24.B20">
    <property type="organism ID" value="382"/>
</dbReference>
<dbReference type="Proteomes" id="UP000001425">
    <property type="component" value="Chromosome"/>
</dbReference>
<dbReference type="GO" id="GO:0031676">
    <property type="term" value="C:plasma membrane-derived thylakoid membrane"/>
    <property type="evidence" value="ECO:0007669"/>
    <property type="project" value="UniProtKB-SubCell"/>
</dbReference>
<dbReference type="GO" id="GO:0005524">
    <property type="term" value="F:ATP binding"/>
    <property type="evidence" value="ECO:0007669"/>
    <property type="project" value="UniProtKB-UniRule"/>
</dbReference>
<dbReference type="GO" id="GO:0016887">
    <property type="term" value="F:ATP hydrolysis activity"/>
    <property type="evidence" value="ECO:0007669"/>
    <property type="project" value="UniProtKB-UniRule"/>
</dbReference>
<dbReference type="GO" id="GO:0004176">
    <property type="term" value="F:ATP-dependent peptidase activity"/>
    <property type="evidence" value="ECO:0000318"/>
    <property type="project" value="GO_Central"/>
</dbReference>
<dbReference type="GO" id="GO:0004222">
    <property type="term" value="F:metalloendopeptidase activity"/>
    <property type="evidence" value="ECO:0007669"/>
    <property type="project" value="InterPro"/>
</dbReference>
<dbReference type="GO" id="GO:0008270">
    <property type="term" value="F:zinc ion binding"/>
    <property type="evidence" value="ECO:0007669"/>
    <property type="project" value="UniProtKB-UniRule"/>
</dbReference>
<dbReference type="GO" id="GO:0030163">
    <property type="term" value="P:protein catabolic process"/>
    <property type="evidence" value="ECO:0007669"/>
    <property type="project" value="UniProtKB-UniRule"/>
</dbReference>
<dbReference type="GO" id="GO:0006508">
    <property type="term" value="P:proteolysis"/>
    <property type="evidence" value="ECO:0000318"/>
    <property type="project" value="GO_Central"/>
</dbReference>
<dbReference type="CDD" id="cd19501">
    <property type="entry name" value="RecA-like_FtsH"/>
    <property type="match status" value="1"/>
</dbReference>
<dbReference type="FunFam" id="1.10.8.60:FF:000001">
    <property type="entry name" value="ATP-dependent zinc metalloprotease FtsH"/>
    <property type="match status" value="1"/>
</dbReference>
<dbReference type="FunFam" id="1.20.58.760:FF:000001">
    <property type="entry name" value="ATP-dependent zinc metalloprotease FtsH"/>
    <property type="match status" value="1"/>
</dbReference>
<dbReference type="FunFam" id="3.40.50.300:FF:000001">
    <property type="entry name" value="ATP-dependent zinc metalloprotease FtsH"/>
    <property type="match status" value="1"/>
</dbReference>
<dbReference type="Gene3D" id="1.10.8.60">
    <property type="match status" value="1"/>
</dbReference>
<dbReference type="Gene3D" id="3.30.720.210">
    <property type="match status" value="1"/>
</dbReference>
<dbReference type="Gene3D" id="3.40.50.300">
    <property type="entry name" value="P-loop containing nucleotide triphosphate hydrolases"/>
    <property type="match status" value="1"/>
</dbReference>
<dbReference type="Gene3D" id="1.20.58.760">
    <property type="entry name" value="Peptidase M41"/>
    <property type="match status" value="1"/>
</dbReference>
<dbReference type="HAMAP" id="MF_01458">
    <property type="entry name" value="FtsH"/>
    <property type="match status" value="1"/>
</dbReference>
<dbReference type="InterPro" id="IPR003593">
    <property type="entry name" value="AAA+_ATPase"/>
</dbReference>
<dbReference type="InterPro" id="IPR041569">
    <property type="entry name" value="AAA_lid_3"/>
</dbReference>
<dbReference type="InterPro" id="IPR003959">
    <property type="entry name" value="ATPase_AAA_core"/>
</dbReference>
<dbReference type="InterPro" id="IPR003960">
    <property type="entry name" value="ATPase_AAA_CS"/>
</dbReference>
<dbReference type="InterPro" id="IPR005936">
    <property type="entry name" value="FtsH"/>
</dbReference>
<dbReference type="InterPro" id="IPR027417">
    <property type="entry name" value="P-loop_NTPase"/>
</dbReference>
<dbReference type="InterPro" id="IPR011546">
    <property type="entry name" value="Pept_M41_FtsH_extracell"/>
</dbReference>
<dbReference type="InterPro" id="IPR000642">
    <property type="entry name" value="Peptidase_M41"/>
</dbReference>
<dbReference type="InterPro" id="IPR037219">
    <property type="entry name" value="Peptidase_M41-like"/>
</dbReference>
<dbReference type="NCBIfam" id="TIGR01241">
    <property type="entry name" value="FtsH_fam"/>
    <property type="match status" value="1"/>
</dbReference>
<dbReference type="PANTHER" id="PTHR23076:SF113">
    <property type="entry name" value="ATP-DEPENDENT ZINC METALLOPROTEASE FTSH 1, CHLOROPLASTIC-RELATED"/>
    <property type="match status" value="1"/>
</dbReference>
<dbReference type="PANTHER" id="PTHR23076">
    <property type="entry name" value="METALLOPROTEASE M41 FTSH"/>
    <property type="match status" value="1"/>
</dbReference>
<dbReference type="Pfam" id="PF00004">
    <property type="entry name" value="AAA"/>
    <property type="match status" value="1"/>
</dbReference>
<dbReference type="Pfam" id="PF17862">
    <property type="entry name" value="AAA_lid_3"/>
    <property type="match status" value="1"/>
</dbReference>
<dbReference type="Pfam" id="PF06480">
    <property type="entry name" value="FtsH_ext"/>
    <property type="match status" value="1"/>
</dbReference>
<dbReference type="Pfam" id="PF01434">
    <property type="entry name" value="Peptidase_M41"/>
    <property type="match status" value="1"/>
</dbReference>
<dbReference type="SMART" id="SM00382">
    <property type="entry name" value="AAA"/>
    <property type="match status" value="1"/>
</dbReference>
<dbReference type="SUPFAM" id="SSF140990">
    <property type="entry name" value="FtsH protease domain-like"/>
    <property type="match status" value="1"/>
</dbReference>
<dbReference type="SUPFAM" id="SSF52540">
    <property type="entry name" value="P-loop containing nucleoside triphosphate hydrolases"/>
    <property type="match status" value="1"/>
</dbReference>
<dbReference type="PROSITE" id="PS00674">
    <property type="entry name" value="AAA"/>
    <property type="match status" value="1"/>
</dbReference>
<proteinExistence type="evidence at protein level"/>